<dbReference type="EC" id="2.3.1.35" evidence="2"/>
<dbReference type="EC" id="2.3.1.1" evidence="2"/>
<dbReference type="EMBL" id="Z26919">
    <property type="protein sequence ID" value="CAA81544.1"/>
    <property type="molecule type" value="Genomic_DNA"/>
</dbReference>
<dbReference type="EMBL" id="AL009126">
    <property type="protein sequence ID" value="CAB12961.2"/>
    <property type="molecule type" value="Genomic_DNA"/>
</dbReference>
<dbReference type="EMBL" id="Z79580">
    <property type="protein sequence ID" value="CAB01843.1"/>
    <property type="molecule type" value="Genomic_DNA"/>
</dbReference>
<dbReference type="EMBL" id="Y09476">
    <property type="protein sequence ID" value="CAA70639.1"/>
    <property type="molecule type" value="Genomic_DNA"/>
</dbReference>
<dbReference type="PIR" id="I40373">
    <property type="entry name" value="I40373"/>
</dbReference>
<dbReference type="RefSeq" id="NP_389002.2">
    <property type="nucleotide sequence ID" value="NC_000964.3"/>
</dbReference>
<dbReference type="RefSeq" id="WP_003232989.1">
    <property type="nucleotide sequence ID" value="NZ_OZ025638.1"/>
</dbReference>
<dbReference type="SMR" id="P36843"/>
<dbReference type="FunCoup" id="P36843">
    <property type="interactions" value="550"/>
</dbReference>
<dbReference type="IntAct" id="P36843">
    <property type="interactions" value="1"/>
</dbReference>
<dbReference type="MINT" id="P36843"/>
<dbReference type="STRING" id="224308.BSU11200"/>
<dbReference type="MEROPS" id="T05.002"/>
<dbReference type="PaxDb" id="224308-BSU11200"/>
<dbReference type="DNASU" id="939800"/>
<dbReference type="EnsemblBacteria" id="CAB12961">
    <property type="protein sequence ID" value="CAB12961"/>
    <property type="gene ID" value="BSU_11200"/>
</dbReference>
<dbReference type="GeneID" id="939800"/>
<dbReference type="KEGG" id="bsu:BSU11200"/>
<dbReference type="PATRIC" id="fig|224308.179.peg.1205"/>
<dbReference type="eggNOG" id="COG1364">
    <property type="taxonomic scope" value="Bacteria"/>
</dbReference>
<dbReference type="InParanoid" id="P36843"/>
<dbReference type="OrthoDB" id="9804242at2"/>
<dbReference type="PhylomeDB" id="P36843"/>
<dbReference type="BioCyc" id="BSUB:BSU11200-MONOMER"/>
<dbReference type="UniPathway" id="UPA00068">
    <property type="reaction ID" value="UER00106"/>
</dbReference>
<dbReference type="UniPathway" id="UPA00068">
    <property type="reaction ID" value="UER00111"/>
</dbReference>
<dbReference type="Proteomes" id="UP000001570">
    <property type="component" value="Chromosome"/>
</dbReference>
<dbReference type="GO" id="GO:0005737">
    <property type="term" value="C:cytoplasm"/>
    <property type="evidence" value="ECO:0007669"/>
    <property type="project" value="UniProtKB-SubCell"/>
</dbReference>
<dbReference type="GO" id="GO:0004358">
    <property type="term" value="F:glutamate N-acetyltransferase activity"/>
    <property type="evidence" value="ECO:0007669"/>
    <property type="project" value="UniProtKB-UniRule"/>
</dbReference>
<dbReference type="GO" id="GO:0004042">
    <property type="term" value="F:L-glutamate N-acetyltransferase activity"/>
    <property type="evidence" value="ECO:0000318"/>
    <property type="project" value="GO_Central"/>
</dbReference>
<dbReference type="GO" id="GO:0006526">
    <property type="term" value="P:L-arginine biosynthetic process"/>
    <property type="evidence" value="ECO:0007669"/>
    <property type="project" value="UniProtKB-UniRule"/>
</dbReference>
<dbReference type="GO" id="GO:0006592">
    <property type="term" value="P:ornithine biosynthetic process"/>
    <property type="evidence" value="ECO:0000318"/>
    <property type="project" value="GO_Central"/>
</dbReference>
<dbReference type="CDD" id="cd02152">
    <property type="entry name" value="OAT"/>
    <property type="match status" value="1"/>
</dbReference>
<dbReference type="FunFam" id="3.10.20.340:FF:000001">
    <property type="entry name" value="Arginine biosynthesis bifunctional protein ArgJ, chloroplastic"/>
    <property type="match status" value="1"/>
</dbReference>
<dbReference type="FunFam" id="3.60.70.12:FF:000001">
    <property type="entry name" value="Arginine biosynthesis bifunctional protein ArgJ, chloroplastic"/>
    <property type="match status" value="1"/>
</dbReference>
<dbReference type="FunFam" id="3.30.2330.10:FF:000001">
    <property type="entry name" value="Arginine biosynthesis bifunctional protein ArgJ, mitochondrial"/>
    <property type="match status" value="1"/>
</dbReference>
<dbReference type="Gene3D" id="3.30.2330.10">
    <property type="entry name" value="arginine biosynthesis bifunctional protein suprefamily"/>
    <property type="match status" value="1"/>
</dbReference>
<dbReference type="Gene3D" id="3.10.20.340">
    <property type="entry name" value="ArgJ beta chain, C-terminal domain"/>
    <property type="match status" value="1"/>
</dbReference>
<dbReference type="Gene3D" id="3.60.70.12">
    <property type="entry name" value="L-amino peptidase D-ALA esterase/amidase"/>
    <property type="match status" value="1"/>
</dbReference>
<dbReference type="HAMAP" id="MF_01106">
    <property type="entry name" value="ArgJ"/>
    <property type="match status" value="1"/>
</dbReference>
<dbReference type="InterPro" id="IPR002813">
    <property type="entry name" value="Arg_biosynth_ArgJ"/>
</dbReference>
<dbReference type="InterPro" id="IPR016117">
    <property type="entry name" value="ArgJ-like_dom_sf"/>
</dbReference>
<dbReference type="InterPro" id="IPR042195">
    <property type="entry name" value="ArgJ_beta_C"/>
</dbReference>
<dbReference type="NCBIfam" id="TIGR00120">
    <property type="entry name" value="ArgJ"/>
    <property type="match status" value="1"/>
</dbReference>
<dbReference type="NCBIfam" id="NF003802">
    <property type="entry name" value="PRK05388.1"/>
    <property type="match status" value="1"/>
</dbReference>
<dbReference type="PANTHER" id="PTHR23100">
    <property type="entry name" value="ARGININE BIOSYNTHESIS BIFUNCTIONAL PROTEIN ARGJ"/>
    <property type="match status" value="1"/>
</dbReference>
<dbReference type="PANTHER" id="PTHR23100:SF0">
    <property type="entry name" value="ARGININE BIOSYNTHESIS BIFUNCTIONAL PROTEIN ARGJ, MITOCHONDRIAL"/>
    <property type="match status" value="1"/>
</dbReference>
<dbReference type="Pfam" id="PF01960">
    <property type="entry name" value="ArgJ"/>
    <property type="match status" value="1"/>
</dbReference>
<dbReference type="SUPFAM" id="SSF56266">
    <property type="entry name" value="DmpA/ArgJ-like"/>
    <property type="match status" value="1"/>
</dbReference>
<comment type="function">
    <text evidence="2">Catalyzes two activities which are involved in the cyclic version of arginine biosynthesis: the synthesis of N-acetylglutamate from glutamate and acetyl-CoA as the acetyl donor, and of ornithine by transacetylation between N(2)-acetylornithine and glutamate.</text>
</comment>
<comment type="catalytic activity">
    <reaction evidence="2">
        <text>N(2)-acetyl-L-ornithine + L-glutamate = N-acetyl-L-glutamate + L-ornithine</text>
        <dbReference type="Rhea" id="RHEA:15349"/>
        <dbReference type="ChEBI" id="CHEBI:29985"/>
        <dbReference type="ChEBI" id="CHEBI:44337"/>
        <dbReference type="ChEBI" id="CHEBI:46911"/>
        <dbReference type="ChEBI" id="CHEBI:57805"/>
        <dbReference type="EC" id="2.3.1.35"/>
    </reaction>
</comment>
<comment type="catalytic activity">
    <reaction evidence="2">
        <text>L-glutamate + acetyl-CoA = N-acetyl-L-glutamate + CoA + H(+)</text>
        <dbReference type="Rhea" id="RHEA:24292"/>
        <dbReference type="ChEBI" id="CHEBI:15378"/>
        <dbReference type="ChEBI" id="CHEBI:29985"/>
        <dbReference type="ChEBI" id="CHEBI:44337"/>
        <dbReference type="ChEBI" id="CHEBI:57287"/>
        <dbReference type="ChEBI" id="CHEBI:57288"/>
        <dbReference type="EC" id="2.3.1.1"/>
    </reaction>
</comment>
<comment type="activity regulation">
    <text evidence="1">Feedback inhibition by L-arginine.</text>
</comment>
<comment type="pathway">
    <text evidence="2">Amino-acid biosynthesis; L-arginine biosynthesis; L-ornithine and N-acetyl-L-glutamate from L-glutamate and N(2)-acetyl-L-ornithine (cyclic): step 1/1.</text>
</comment>
<comment type="pathway">
    <text evidence="2">Amino-acid biosynthesis; L-arginine biosynthesis; N(2)-acetyl-L-ornithine from L-glutamate: step 1/4.</text>
</comment>
<comment type="subunit">
    <text evidence="2">Heterotetramer of two alpha and two beta chains.</text>
</comment>
<comment type="subcellular location">
    <subcellularLocation>
        <location evidence="2">Cytoplasm</location>
    </subcellularLocation>
</comment>
<comment type="similarity">
    <text evidence="2">Belongs to the ArgJ family.</text>
</comment>
<evidence type="ECO:0000250" key="1"/>
<evidence type="ECO:0000255" key="2">
    <source>
        <dbReference type="HAMAP-Rule" id="MF_01106"/>
    </source>
</evidence>
<evidence type="ECO:0000305" key="3"/>
<reference key="1">
    <citation type="journal article" date="1994" name="Microbiology">
        <title>Sequence and analysis of the citrulline biosynthetic operon argC-F from Bacillus subtilis.</title>
        <authorList>
            <person name="O'Reilly M."/>
            <person name="Devine K.M."/>
        </authorList>
    </citation>
    <scope>NUCLEOTIDE SEQUENCE [GENOMIC DNA]</scope>
    <source>
        <strain>168</strain>
    </source>
</reference>
<reference key="2">
    <citation type="journal article" date="1997" name="Nature">
        <title>The complete genome sequence of the Gram-positive bacterium Bacillus subtilis.</title>
        <authorList>
            <person name="Kunst F."/>
            <person name="Ogasawara N."/>
            <person name="Moszer I."/>
            <person name="Albertini A.M."/>
            <person name="Alloni G."/>
            <person name="Azevedo V."/>
            <person name="Bertero M.G."/>
            <person name="Bessieres P."/>
            <person name="Bolotin A."/>
            <person name="Borchert S."/>
            <person name="Borriss R."/>
            <person name="Boursier L."/>
            <person name="Brans A."/>
            <person name="Braun M."/>
            <person name="Brignell S.C."/>
            <person name="Bron S."/>
            <person name="Brouillet S."/>
            <person name="Bruschi C.V."/>
            <person name="Caldwell B."/>
            <person name="Capuano V."/>
            <person name="Carter N.M."/>
            <person name="Choi S.-K."/>
            <person name="Codani J.-J."/>
            <person name="Connerton I.F."/>
            <person name="Cummings N.J."/>
            <person name="Daniel R.A."/>
            <person name="Denizot F."/>
            <person name="Devine K.M."/>
            <person name="Duesterhoeft A."/>
            <person name="Ehrlich S.D."/>
            <person name="Emmerson P.T."/>
            <person name="Entian K.-D."/>
            <person name="Errington J."/>
            <person name="Fabret C."/>
            <person name="Ferrari E."/>
            <person name="Foulger D."/>
            <person name="Fritz C."/>
            <person name="Fujita M."/>
            <person name="Fujita Y."/>
            <person name="Fuma S."/>
            <person name="Galizzi A."/>
            <person name="Galleron N."/>
            <person name="Ghim S.-Y."/>
            <person name="Glaser P."/>
            <person name="Goffeau A."/>
            <person name="Golightly E.J."/>
            <person name="Grandi G."/>
            <person name="Guiseppi G."/>
            <person name="Guy B.J."/>
            <person name="Haga K."/>
            <person name="Haiech J."/>
            <person name="Harwood C.R."/>
            <person name="Henaut A."/>
            <person name="Hilbert H."/>
            <person name="Holsappel S."/>
            <person name="Hosono S."/>
            <person name="Hullo M.-F."/>
            <person name="Itaya M."/>
            <person name="Jones L.-M."/>
            <person name="Joris B."/>
            <person name="Karamata D."/>
            <person name="Kasahara Y."/>
            <person name="Klaerr-Blanchard M."/>
            <person name="Klein C."/>
            <person name="Kobayashi Y."/>
            <person name="Koetter P."/>
            <person name="Koningstein G."/>
            <person name="Krogh S."/>
            <person name="Kumano M."/>
            <person name="Kurita K."/>
            <person name="Lapidus A."/>
            <person name="Lardinois S."/>
            <person name="Lauber J."/>
            <person name="Lazarevic V."/>
            <person name="Lee S.-M."/>
            <person name="Levine A."/>
            <person name="Liu H."/>
            <person name="Masuda S."/>
            <person name="Mauel C."/>
            <person name="Medigue C."/>
            <person name="Medina N."/>
            <person name="Mellado R.P."/>
            <person name="Mizuno M."/>
            <person name="Moestl D."/>
            <person name="Nakai S."/>
            <person name="Noback M."/>
            <person name="Noone D."/>
            <person name="O'Reilly M."/>
            <person name="Ogawa K."/>
            <person name="Ogiwara A."/>
            <person name="Oudega B."/>
            <person name="Park S.-H."/>
            <person name="Parro V."/>
            <person name="Pohl T.M."/>
            <person name="Portetelle D."/>
            <person name="Porwollik S."/>
            <person name="Prescott A.M."/>
            <person name="Presecan E."/>
            <person name="Pujic P."/>
            <person name="Purnelle B."/>
            <person name="Rapoport G."/>
            <person name="Rey M."/>
            <person name="Reynolds S."/>
            <person name="Rieger M."/>
            <person name="Rivolta C."/>
            <person name="Rocha E."/>
            <person name="Roche B."/>
            <person name="Rose M."/>
            <person name="Sadaie Y."/>
            <person name="Sato T."/>
            <person name="Scanlan E."/>
            <person name="Schleich S."/>
            <person name="Schroeter R."/>
            <person name="Scoffone F."/>
            <person name="Sekiguchi J."/>
            <person name="Sekowska A."/>
            <person name="Seror S.J."/>
            <person name="Serror P."/>
            <person name="Shin B.-S."/>
            <person name="Soldo B."/>
            <person name="Sorokin A."/>
            <person name="Tacconi E."/>
            <person name="Takagi T."/>
            <person name="Takahashi H."/>
            <person name="Takemaru K."/>
            <person name="Takeuchi M."/>
            <person name="Tamakoshi A."/>
            <person name="Tanaka T."/>
            <person name="Terpstra P."/>
            <person name="Tognoni A."/>
            <person name="Tosato V."/>
            <person name="Uchiyama S."/>
            <person name="Vandenbol M."/>
            <person name="Vannier F."/>
            <person name="Vassarotti A."/>
            <person name="Viari A."/>
            <person name="Wambutt R."/>
            <person name="Wedler E."/>
            <person name="Wedler H."/>
            <person name="Weitzenegger T."/>
            <person name="Winters P."/>
            <person name="Wipat A."/>
            <person name="Yamamoto H."/>
            <person name="Yamane K."/>
            <person name="Yasumoto K."/>
            <person name="Yata K."/>
            <person name="Yoshida K."/>
            <person name="Yoshikawa H.-F."/>
            <person name="Zumstein E."/>
            <person name="Yoshikawa H."/>
            <person name="Danchin A."/>
        </authorList>
    </citation>
    <scope>NUCLEOTIDE SEQUENCE [LARGE SCALE GENOMIC DNA]</scope>
    <source>
        <strain>168</strain>
    </source>
</reference>
<reference key="3">
    <citation type="journal article" date="2009" name="Microbiology">
        <title>From a consortium sequence to a unified sequence: the Bacillus subtilis 168 reference genome a decade later.</title>
        <authorList>
            <person name="Barbe V."/>
            <person name="Cruveiller S."/>
            <person name="Kunst F."/>
            <person name="Lenoble P."/>
            <person name="Meurice G."/>
            <person name="Sekowska A."/>
            <person name="Vallenet D."/>
            <person name="Wang T."/>
            <person name="Moszer I."/>
            <person name="Medigue C."/>
            <person name="Danchin A."/>
        </authorList>
    </citation>
    <scope>SEQUENCE REVISION TO 181; 216 AND 242</scope>
</reference>
<reference key="4">
    <citation type="journal article" date="1997" name="Microbiology">
        <title>A 10.3 kbp segment from nprB to argJ at the 102 degrees region of the Bacillus subtilis chromosome.</title>
        <authorList>
            <person name="Levine A."/>
            <person name="Vannier F."/>
            <person name="Roche B."/>
            <person name="Autret S."/>
            <person name="Mavel D."/>
            <person name="Seror S.J."/>
        </authorList>
    </citation>
    <scope>NUCLEOTIDE SEQUENCE [GENOMIC DNA] OF 1-80</scope>
    <source>
        <strain>168</strain>
    </source>
</reference>
<reference key="5">
    <citation type="journal article" date="1997" name="Microbiology">
        <title>Sequencing of regions downstream of addA (98 degrees) and citG (289 degrees) in Bacillus subtilis.</title>
        <authorList>
            <person name="Medina N."/>
            <person name="Vannier F."/>
            <person name="Roche B."/>
            <person name="Autret S."/>
            <person name="Levine A."/>
            <person name="Seror S.J."/>
        </authorList>
    </citation>
    <scope>NUCLEOTIDE SEQUENCE [GENOMIC DNA] OF 1-80</scope>
    <source>
        <strain>168</strain>
    </source>
</reference>
<keyword id="KW-0012">Acyltransferase</keyword>
<keyword id="KW-0028">Amino-acid biosynthesis</keyword>
<keyword id="KW-0055">Arginine biosynthesis</keyword>
<keyword id="KW-0068">Autocatalytic cleavage</keyword>
<keyword id="KW-0963">Cytoplasm</keyword>
<keyword id="KW-0511">Multifunctional enzyme</keyword>
<keyword id="KW-1185">Reference proteome</keyword>
<keyword id="KW-0808">Transferase</keyword>
<name>ARGJ_BACSU</name>
<proteinExistence type="inferred from homology"/>
<accession>P36843</accession>
<gene>
    <name evidence="2" type="primary">argJ</name>
    <name type="ordered locus">BSU11200</name>
</gene>
<organism>
    <name type="scientific">Bacillus subtilis (strain 168)</name>
    <dbReference type="NCBI Taxonomy" id="224308"/>
    <lineage>
        <taxon>Bacteria</taxon>
        <taxon>Bacillati</taxon>
        <taxon>Bacillota</taxon>
        <taxon>Bacilli</taxon>
        <taxon>Bacillales</taxon>
        <taxon>Bacillaceae</taxon>
        <taxon>Bacillus</taxon>
    </lineage>
</organism>
<protein>
    <recommendedName>
        <fullName evidence="2">Arginine biosynthesis bifunctional protein ArgJ</fullName>
    </recommendedName>
    <domain>
        <recommendedName>
            <fullName evidence="2">Glutamate N-acetyltransferase</fullName>
            <ecNumber evidence="2">2.3.1.35</ecNumber>
        </recommendedName>
        <alternativeName>
            <fullName evidence="2">Ornithine acetyltransferase</fullName>
            <shortName evidence="2">OATase</shortName>
        </alternativeName>
        <alternativeName>
            <fullName evidence="2">Ornithine transacetylase</fullName>
        </alternativeName>
    </domain>
    <domain>
        <recommendedName>
            <fullName evidence="2">Amino-acid acetyltransferase</fullName>
            <ecNumber evidence="2">2.3.1.1</ecNumber>
        </recommendedName>
        <alternativeName>
            <fullName evidence="2">N-acetylglutamate synthase</fullName>
            <shortName evidence="2">AGSase</shortName>
        </alternativeName>
    </domain>
    <component>
        <recommendedName>
            <fullName evidence="2">Arginine biosynthesis bifunctional protein ArgJ alpha chain</fullName>
        </recommendedName>
    </component>
    <component>
        <recommendedName>
            <fullName evidence="2">Arginine biosynthesis bifunctional protein ArgJ beta chain</fullName>
        </recommendedName>
    </component>
</protein>
<sequence length="406" mass="43277">MIQLSEDQIVKVTGDVSSPKGFQAKGVHCGLRYSKKDLGVIISETPAVSAAVYTQSHFQAAPIKVTQDSLKHGPTLKAVIVNSAIANACTGEQGLKDAYTMRESFASQLGIEPELVAVSSTGVIGEHLDMEKIHAGIELLKETPAGSGDFEEAILTTDTVIKQTCYELAIGGKTVTIGGAAKGSGMIHPNMATMLGFVTTDAAIEEKALQKALREITDVSFNQITVDGETSTNDMVLVMANGCAENECLTEDHPDWPVFKKALLLTCEDLAKEIARDGEGATKLIEAQVQGAKNNLDANVIAKKIVGSNLVKTAVYGTDANWGRIIGAIGHSAAQVTAEEVEVYLGGQCLFKNNEPQPFSESIAKEYLEGDEITIVIKMAEGDGNGRAWGCDLTYDYIKINASYRT</sequence>
<feature type="chain" id="PRO_0000002121" description="Arginine biosynthesis bifunctional protein ArgJ alpha chain" evidence="2">
    <location>
        <begin position="1"/>
        <end position="192"/>
    </location>
</feature>
<feature type="chain" id="PRO_0000002122" description="Arginine biosynthesis bifunctional protein ArgJ beta chain" evidence="2">
    <location>
        <begin position="193"/>
        <end position="406"/>
    </location>
</feature>
<feature type="active site" description="Nucleophile" evidence="2">
    <location>
        <position position="193"/>
    </location>
</feature>
<feature type="binding site" evidence="2">
    <location>
        <position position="156"/>
    </location>
    <ligand>
        <name>substrate</name>
    </ligand>
</feature>
<feature type="binding site" evidence="2">
    <location>
        <position position="182"/>
    </location>
    <ligand>
        <name>substrate</name>
    </ligand>
</feature>
<feature type="binding site" evidence="2">
    <location>
        <position position="193"/>
    </location>
    <ligand>
        <name>substrate</name>
    </ligand>
</feature>
<feature type="binding site" evidence="2">
    <location>
        <position position="279"/>
    </location>
    <ligand>
        <name>substrate</name>
    </ligand>
</feature>
<feature type="binding site" evidence="2">
    <location>
        <position position="401"/>
    </location>
    <ligand>
        <name>substrate</name>
    </ligand>
</feature>
<feature type="binding site" evidence="2">
    <location>
        <position position="406"/>
    </location>
    <ligand>
        <name>substrate</name>
    </ligand>
</feature>
<feature type="site" description="Involved in the stabilization of negative charge on the oxyanion by the formation of the oxyanion hole" evidence="2">
    <location>
        <position position="121"/>
    </location>
</feature>
<feature type="site" description="Involved in the stabilization of negative charge on the oxyanion by the formation of the oxyanion hole" evidence="2">
    <location>
        <position position="122"/>
    </location>
</feature>
<feature type="site" description="Cleavage; by autolysis" evidence="2">
    <location>
        <begin position="192"/>
        <end position="193"/>
    </location>
</feature>
<feature type="sequence conflict" description="In Ref. 1; CAA81544." evidence="3" ref="1">
    <original>A</original>
    <variation>R</variation>
    <location>
        <position position="181"/>
    </location>
</feature>
<feature type="sequence conflict" description="In Ref. 1; CAA81544." evidence="3" ref="1">
    <original>I</original>
    <variation>T</variation>
    <location>
        <position position="216"/>
    </location>
</feature>
<feature type="sequence conflict" description="In Ref. 1; CAA81544." evidence="3" ref="1">
    <original>G</original>
    <variation>A</variation>
    <location>
        <position position="242"/>
    </location>
</feature>